<proteinExistence type="inferred from homology"/>
<sequence>MINEIKKDTQERMEKSLEALKGHISKIRTGRAQPSLLDAIQVEYYGSATPLRQLANVVAEDARTLAVTVFDRSLISAVEKAILTSDLGLNPSSAGTTIRVPLPPLTEERRRDLIKIVKGEGEQGKVSIRNIRRDANDKIKTLEKEKQISENDERKAQDDIQKITDIYIKKVDEILADKEKELMDF</sequence>
<gene>
    <name evidence="1" type="primary">frr</name>
    <name type="ordered locus">HAPS_0138</name>
</gene>
<evidence type="ECO:0000255" key="1">
    <source>
        <dbReference type="HAMAP-Rule" id="MF_00040"/>
    </source>
</evidence>
<organism>
    <name type="scientific">Glaesserella parasuis serovar 5 (strain SH0165)</name>
    <name type="common">Haemophilus parasuis</name>
    <dbReference type="NCBI Taxonomy" id="557723"/>
    <lineage>
        <taxon>Bacteria</taxon>
        <taxon>Pseudomonadati</taxon>
        <taxon>Pseudomonadota</taxon>
        <taxon>Gammaproteobacteria</taxon>
        <taxon>Pasteurellales</taxon>
        <taxon>Pasteurellaceae</taxon>
        <taxon>Glaesserella</taxon>
    </lineage>
</organism>
<name>RRF_GLAP5</name>
<accession>B8F3D4</accession>
<keyword id="KW-0963">Cytoplasm</keyword>
<keyword id="KW-0648">Protein biosynthesis</keyword>
<keyword id="KW-1185">Reference proteome</keyword>
<comment type="function">
    <text evidence="1">Responsible for the release of ribosomes from messenger RNA at the termination of protein biosynthesis. May increase the efficiency of translation by recycling ribosomes from one round of translation to another.</text>
</comment>
<comment type="subcellular location">
    <subcellularLocation>
        <location evidence="1">Cytoplasm</location>
    </subcellularLocation>
</comment>
<comment type="similarity">
    <text evidence="1">Belongs to the RRF family.</text>
</comment>
<reference key="1">
    <citation type="journal article" date="2009" name="J. Bacteriol.">
        <title>Complete genome sequence of Haemophilus parasuis SH0165.</title>
        <authorList>
            <person name="Yue M."/>
            <person name="Yang F."/>
            <person name="Yang J."/>
            <person name="Bei W."/>
            <person name="Cai X."/>
            <person name="Chen L."/>
            <person name="Dong J."/>
            <person name="Zhou R."/>
            <person name="Jin M."/>
            <person name="Jin Q."/>
            <person name="Chen H."/>
        </authorList>
    </citation>
    <scope>NUCLEOTIDE SEQUENCE [LARGE SCALE GENOMIC DNA]</scope>
    <source>
        <strain>SH0165</strain>
    </source>
</reference>
<protein>
    <recommendedName>
        <fullName evidence="1">Ribosome-recycling factor</fullName>
        <shortName evidence="1">RRF</shortName>
    </recommendedName>
    <alternativeName>
        <fullName evidence="1">Ribosome-releasing factor</fullName>
    </alternativeName>
</protein>
<feature type="chain" id="PRO_1000194933" description="Ribosome-recycling factor">
    <location>
        <begin position="1"/>
        <end position="185"/>
    </location>
</feature>
<dbReference type="EMBL" id="CP001321">
    <property type="protein sequence ID" value="ACL31836.1"/>
    <property type="molecule type" value="Genomic_DNA"/>
</dbReference>
<dbReference type="RefSeq" id="WP_005711232.1">
    <property type="nucleotide sequence ID" value="NC_011852.1"/>
</dbReference>
<dbReference type="SMR" id="B8F3D4"/>
<dbReference type="STRING" id="557723.HAPS_0138"/>
<dbReference type="GeneID" id="66618530"/>
<dbReference type="KEGG" id="hap:HAPS_0138"/>
<dbReference type="HOGENOM" id="CLU_073981_2_1_6"/>
<dbReference type="Proteomes" id="UP000006743">
    <property type="component" value="Chromosome"/>
</dbReference>
<dbReference type="GO" id="GO:0005829">
    <property type="term" value="C:cytosol"/>
    <property type="evidence" value="ECO:0007669"/>
    <property type="project" value="GOC"/>
</dbReference>
<dbReference type="GO" id="GO:0043023">
    <property type="term" value="F:ribosomal large subunit binding"/>
    <property type="evidence" value="ECO:0007669"/>
    <property type="project" value="TreeGrafter"/>
</dbReference>
<dbReference type="GO" id="GO:0002184">
    <property type="term" value="P:cytoplasmic translational termination"/>
    <property type="evidence" value="ECO:0007669"/>
    <property type="project" value="TreeGrafter"/>
</dbReference>
<dbReference type="CDD" id="cd00520">
    <property type="entry name" value="RRF"/>
    <property type="match status" value="1"/>
</dbReference>
<dbReference type="FunFam" id="1.10.132.20:FF:000001">
    <property type="entry name" value="Ribosome-recycling factor"/>
    <property type="match status" value="1"/>
</dbReference>
<dbReference type="FunFam" id="3.30.1360.40:FF:000001">
    <property type="entry name" value="Ribosome-recycling factor"/>
    <property type="match status" value="1"/>
</dbReference>
<dbReference type="Gene3D" id="3.30.1360.40">
    <property type="match status" value="1"/>
</dbReference>
<dbReference type="Gene3D" id="1.10.132.20">
    <property type="entry name" value="Ribosome-recycling factor"/>
    <property type="match status" value="1"/>
</dbReference>
<dbReference type="HAMAP" id="MF_00040">
    <property type="entry name" value="RRF"/>
    <property type="match status" value="1"/>
</dbReference>
<dbReference type="InterPro" id="IPR002661">
    <property type="entry name" value="Ribosome_recyc_fac"/>
</dbReference>
<dbReference type="InterPro" id="IPR023584">
    <property type="entry name" value="Ribosome_recyc_fac_dom"/>
</dbReference>
<dbReference type="InterPro" id="IPR036191">
    <property type="entry name" value="RRF_sf"/>
</dbReference>
<dbReference type="NCBIfam" id="TIGR00496">
    <property type="entry name" value="frr"/>
    <property type="match status" value="1"/>
</dbReference>
<dbReference type="PANTHER" id="PTHR20982:SF3">
    <property type="entry name" value="MITOCHONDRIAL RIBOSOME RECYCLING FACTOR PSEUDO 1"/>
    <property type="match status" value="1"/>
</dbReference>
<dbReference type="PANTHER" id="PTHR20982">
    <property type="entry name" value="RIBOSOME RECYCLING FACTOR"/>
    <property type="match status" value="1"/>
</dbReference>
<dbReference type="Pfam" id="PF01765">
    <property type="entry name" value="RRF"/>
    <property type="match status" value="1"/>
</dbReference>
<dbReference type="SUPFAM" id="SSF55194">
    <property type="entry name" value="Ribosome recycling factor, RRF"/>
    <property type="match status" value="1"/>
</dbReference>